<gene>
    <name evidence="1" type="primary">argD</name>
    <name type="ordered locus">tlr1328</name>
</gene>
<comment type="catalytic activity">
    <reaction evidence="1">
        <text>N(2)-acetyl-L-ornithine + 2-oxoglutarate = N-acetyl-L-glutamate 5-semialdehyde + L-glutamate</text>
        <dbReference type="Rhea" id="RHEA:18049"/>
        <dbReference type="ChEBI" id="CHEBI:16810"/>
        <dbReference type="ChEBI" id="CHEBI:29123"/>
        <dbReference type="ChEBI" id="CHEBI:29985"/>
        <dbReference type="ChEBI" id="CHEBI:57805"/>
        <dbReference type="EC" id="2.6.1.11"/>
    </reaction>
</comment>
<comment type="cofactor">
    <cofactor evidence="1">
        <name>pyridoxal 5'-phosphate</name>
        <dbReference type="ChEBI" id="CHEBI:597326"/>
    </cofactor>
    <text evidence="1">Binds 1 pyridoxal phosphate per subunit.</text>
</comment>
<comment type="pathway">
    <text evidence="1">Amino-acid biosynthesis; L-arginine biosynthesis; N(2)-acetyl-L-ornithine from L-glutamate: step 4/4.</text>
</comment>
<comment type="subunit">
    <text evidence="1">Homodimer.</text>
</comment>
<comment type="subcellular location">
    <subcellularLocation>
        <location evidence="1">Cytoplasm</location>
    </subcellularLocation>
</comment>
<comment type="miscellaneous">
    <text evidence="1">May also have succinyldiaminopimelate aminotransferase activity, thus carrying out the corresponding step in lysine biosynthesis.</text>
</comment>
<comment type="similarity">
    <text evidence="1">Belongs to the class-III pyridoxal-phosphate-dependent aminotransferase family. ArgD subfamily.</text>
</comment>
<sequence length="412" mass="44088">MLAAPLPSFSTDAFDQVVMSTYGRFPITLVRGEGCRVWDDQGRSYLDFVAGIATCTLGHAHPALVETVSRQMQTLHHVSNLYYIPQQGALAQWLVAHSCGDRVFFCNSGAEANEAAIKLARKYAHTVRHIANPIIITAQASFHGRTLATITATGQPKYQKYFDPLVPGFAYVPYNDLGALEALVASLDQPQPQVAAILLEPLQGEGGVRPGDRAYFEQVRQLCTEKGILLIFDEVQVGMGRTGSLWGYETLGVEPDIFTSAKGLAGGVPIGAMIAKEFCAVFQPGDHASTFGGNPLATAAALTVCETLEKENLLENVRDRGQQLRTGLQELAAAYPQVIAEVRGWGLINGLELQPDTPLTAAEVVKAALAEGLLLVPAGPKVVRFVPPLIVSATEIDMALGAMSRALAHLAA</sequence>
<name>ARGD_THEVB</name>
<feature type="chain" id="PRO_0000112802" description="Acetylornithine aminotransferase">
    <location>
        <begin position="1"/>
        <end position="412"/>
    </location>
</feature>
<feature type="binding site" evidence="1">
    <location>
        <begin position="109"/>
        <end position="110"/>
    </location>
    <ligand>
        <name>pyridoxal 5'-phosphate</name>
        <dbReference type="ChEBI" id="CHEBI:597326"/>
    </ligand>
</feature>
<feature type="binding site" evidence="1">
    <location>
        <position position="142"/>
    </location>
    <ligand>
        <name>pyridoxal 5'-phosphate</name>
        <dbReference type="ChEBI" id="CHEBI:597326"/>
    </ligand>
</feature>
<feature type="binding site" evidence="1">
    <location>
        <position position="145"/>
    </location>
    <ligand>
        <name>N(2)-acetyl-L-ornithine</name>
        <dbReference type="ChEBI" id="CHEBI:57805"/>
    </ligand>
</feature>
<feature type="binding site" evidence="1">
    <location>
        <begin position="233"/>
        <end position="236"/>
    </location>
    <ligand>
        <name>pyridoxal 5'-phosphate</name>
        <dbReference type="ChEBI" id="CHEBI:597326"/>
    </ligand>
</feature>
<feature type="binding site" evidence="1">
    <location>
        <position position="289"/>
    </location>
    <ligand>
        <name>N(2)-acetyl-L-ornithine</name>
        <dbReference type="ChEBI" id="CHEBI:57805"/>
    </ligand>
</feature>
<feature type="binding site" evidence="1">
    <location>
        <position position="290"/>
    </location>
    <ligand>
        <name>pyridoxal 5'-phosphate</name>
        <dbReference type="ChEBI" id="CHEBI:597326"/>
    </ligand>
</feature>
<feature type="modified residue" description="N6-(pyridoxal phosphate)lysine" evidence="1">
    <location>
        <position position="262"/>
    </location>
</feature>
<keyword id="KW-0028">Amino-acid biosynthesis</keyword>
<keyword id="KW-0032">Aminotransferase</keyword>
<keyword id="KW-0055">Arginine biosynthesis</keyword>
<keyword id="KW-0963">Cytoplasm</keyword>
<keyword id="KW-0663">Pyridoxal phosphate</keyword>
<keyword id="KW-1185">Reference proteome</keyword>
<keyword id="KW-0808">Transferase</keyword>
<accession>P59322</accession>
<organism>
    <name type="scientific">Thermosynechococcus vestitus (strain NIES-2133 / IAM M-273 / BP-1)</name>
    <dbReference type="NCBI Taxonomy" id="197221"/>
    <lineage>
        <taxon>Bacteria</taxon>
        <taxon>Bacillati</taxon>
        <taxon>Cyanobacteriota</taxon>
        <taxon>Cyanophyceae</taxon>
        <taxon>Acaryochloridales</taxon>
        <taxon>Thermosynechococcaceae</taxon>
        <taxon>Thermosynechococcus</taxon>
    </lineage>
</organism>
<evidence type="ECO:0000255" key="1">
    <source>
        <dbReference type="HAMAP-Rule" id="MF_01107"/>
    </source>
</evidence>
<proteinExistence type="inferred from homology"/>
<reference key="1">
    <citation type="journal article" date="2002" name="DNA Res.">
        <title>Complete genome structure of the thermophilic cyanobacterium Thermosynechococcus elongatus BP-1.</title>
        <authorList>
            <person name="Nakamura Y."/>
            <person name="Kaneko T."/>
            <person name="Sato S."/>
            <person name="Ikeuchi M."/>
            <person name="Katoh H."/>
            <person name="Sasamoto S."/>
            <person name="Watanabe A."/>
            <person name="Iriguchi M."/>
            <person name="Kawashima K."/>
            <person name="Kimura T."/>
            <person name="Kishida Y."/>
            <person name="Kiyokawa C."/>
            <person name="Kohara M."/>
            <person name="Matsumoto M."/>
            <person name="Matsuno A."/>
            <person name="Nakazaki N."/>
            <person name="Shimpo S."/>
            <person name="Sugimoto M."/>
            <person name="Takeuchi C."/>
            <person name="Yamada M."/>
            <person name="Tabata S."/>
        </authorList>
    </citation>
    <scope>NUCLEOTIDE SEQUENCE [LARGE SCALE GENOMIC DNA]</scope>
    <source>
        <strain>NIES-2133 / IAM M-273 / BP-1</strain>
    </source>
</reference>
<dbReference type="EC" id="2.6.1.11" evidence="1"/>
<dbReference type="EMBL" id="BA000039">
    <property type="protein sequence ID" value="BAC08880.1"/>
    <property type="molecule type" value="Genomic_DNA"/>
</dbReference>
<dbReference type="RefSeq" id="NP_682118.1">
    <property type="nucleotide sequence ID" value="NC_004113.1"/>
</dbReference>
<dbReference type="RefSeq" id="WP_011057168.1">
    <property type="nucleotide sequence ID" value="NC_004113.1"/>
</dbReference>
<dbReference type="SMR" id="P59322"/>
<dbReference type="STRING" id="197221.gene:10747926"/>
<dbReference type="EnsemblBacteria" id="BAC08880">
    <property type="protein sequence ID" value="BAC08880"/>
    <property type="gene ID" value="BAC08880"/>
</dbReference>
<dbReference type="KEGG" id="tel:tlr1328"/>
<dbReference type="PATRIC" id="fig|197221.4.peg.1396"/>
<dbReference type="eggNOG" id="COG4992">
    <property type="taxonomic scope" value="Bacteria"/>
</dbReference>
<dbReference type="UniPathway" id="UPA00068">
    <property type="reaction ID" value="UER00109"/>
</dbReference>
<dbReference type="Proteomes" id="UP000000440">
    <property type="component" value="Chromosome"/>
</dbReference>
<dbReference type="GO" id="GO:0005737">
    <property type="term" value="C:cytoplasm"/>
    <property type="evidence" value="ECO:0007669"/>
    <property type="project" value="UniProtKB-SubCell"/>
</dbReference>
<dbReference type="GO" id="GO:0042802">
    <property type="term" value="F:identical protein binding"/>
    <property type="evidence" value="ECO:0007669"/>
    <property type="project" value="TreeGrafter"/>
</dbReference>
<dbReference type="GO" id="GO:0003992">
    <property type="term" value="F:N2-acetyl-L-ornithine:2-oxoglutarate 5-aminotransferase activity"/>
    <property type="evidence" value="ECO:0007669"/>
    <property type="project" value="UniProtKB-UniRule"/>
</dbReference>
<dbReference type="GO" id="GO:0030170">
    <property type="term" value="F:pyridoxal phosphate binding"/>
    <property type="evidence" value="ECO:0007669"/>
    <property type="project" value="InterPro"/>
</dbReference>
<dbReference type="GO" id="GO:0006526">
    <property type="term" value="P:L-arginine biosynthetic process"/>
    <property type="evidence" value="ECO:0007669"/>
    <property type="project" value="UniProtKB-UniRule"/>
</dbReference>
<dbReference type="CDD" id="cd00610">
    <property type="entry name" value="OAT_like"/>
    <property type="match status" value="1"/>
</dbReference>
<dbReference type="FunFam" id="3.40.640.10:FF:000004">
    <property type="entry name" value="Acetylornithine aminotransferase"/>
    <property type="match status" value="1"/>
</dbReference>
<dbReference type="Gene3D" id="3.90.1150.10">
    <property type="entry name" value="Aspartate Aminotransferase, domain 1"/>
    <property type="match status" value="1"/>
</dbReference>
<dbReference type="Gene3D" id="3.40.640.10">
    <property type="entry name" value="Type I PLP-dependent aspartate aminotransferase-like (Major domain)"/>
    <property type="match status" value="1"/>
</dbReference>
<dbReference type="HAMAP" id="MF_01107">
    <property type="entry name" value="ArgD_aminotrans_3"/>
    <property type="match status" value="1"/>
</dbReference>
<dbReference type="InterPro" id="IPR004636">
    <property type="entry name" value="AcOrn/SuccOrn_fam"/>
</dbReference>
<dbReference type="InterPro" id="IPR005814">
    <property type="entry name" value="Aminotrans_3"/>
</dbReference>
<dbReference type="InterPro" id="IPR049704">
    <property type="entry name" value="Aminotrans_3_PPA_site"/>
</dbReference>
<dbReference type="InterPro" id="IPR050103">
    <property type="entry name" value="Class-III_PLP-dep_AT"/>
</dbReference>
<dbReference type="InterPro" id="IPR015424">
    <property type="entry name" value="PyrdxlP-dep_Trfase"/>
</dbReference>
<dbReference type="InterPro" id="IPR015421">
    <property type="entry name" value="PyrdxlP-dep_Trfase_major"/>
</dbReference>
<dbReference type="InterPro" id="IPR015422">
    <property type="entry name" value="PyrdxlP-dep_Trfase_small"/>
</dbReference>
<dbReference type="NCBIfam" id="TIGR00707">
    <property type="entry name" value="argD"/>
    <property type="match status" value="1"/>
</dbReference>
<dbReference type="NCBIfam" id="NF002325">
    <property type="entry name" value="PRK01278.1"/>
    <property type="match status" value="1"/>
</dbReference>
<dbReference type="PANTHER" id="PTHR11986:SF79">
    <property type="entry name" value="ACETYLORNITHINE AMINOTRANSFERASE, MITOCHONDRIAL"/>
    <property type="match status" value="1"/>
</dbReference>
<dbReference type="PANTHER" id="PTHR11986">
    <property type="entry name" value="AMINOTRANSFERASE CLASS III"/>
    <property type="match status" value="1"/>
</dbReference>
<dbReference type="Pfam" id="PF00202">
    <property type="entry name" value="Aminotran_3"/>
    <property type="match status" value="1"/>
</dbReference>
<dbReference type="PIRSF" id="PIRSF000521">
    <property type="entry name" value="Transaminase_4ab_Lys_Orn"/>
    <property type="match status" value="1"/>
</dbReference>
<dbReference type="SUPFAM" id="SSF53383">
    <property type="entry name" value="PLP-dependent transferases"/>
    <property type="match status" value="1"/>
</dbReference>
<dbReference type="PROSITE" id="PS00600">
    <property type="entry name" value="AA_TRANSFER_CLASS_3"/>
    <property type="match status" value="1"/>
</dbReference>
<protein>
    <recommendedName>
        <fullName evidence="1">Acetylornithine aminotransferase</fullName>
        <shortName evidence="1">ACOAT</shortName>
        <ecNumber evidence="1">2.6.1.11</ecNumber>
    </recommendedName>
</protein>